<dbReference type="EMBL" id="AY184240">
    <property type="protein sequence ID" value="AAO25744.1"/>
    <property type="molecule type" value="mRNA"/>
</dbReference>
<dbReference type="EMBL" id="X58830">
    <property type="protein sequence ID" value="CAA41634.1"/>
    <property type="molecule type" value="mRNA"/>
</dbReference>
<dbReference type="PIR" id="S37618">
    <property type="entry name" value="S37618"/>
</dbReference>
<dbReference type="RefSeq" id="NP_037239.1">
    <property type="nucleotide sequence ID" value="NM_013107.2"/>
</dbReference>
<dbReference type="SMR" id="Q04906"/>
<dbReference type="FunCoup" id="Q04906">
    <property type="interactions" value="470"/>
</dbReference>
<dbReference type="STRING" id="10116.ENSRNOP00000018359"/>
<dbReference type="GlyCosmos" id="Q04906">
    <property type="glycosylation" value="5 sites, No reported glycans"/>
</dbReference>
<dbReference type="GlyGen" id="Q04906">
    <property type="glycosylation" value="5 sites"/>
</dbReference>
<dbReference type="iPTMnet" id="Q04906"/>
<dbReference type="PhosphoSitePlus" id="Q04906"/>
<dbReference type="PaxDb" id="10116-ENSRNOP00000018359"/>
<dbReference type="Ensembl" id="ENSRNOT00000018359.8">
    <property type="protein sequence ID" value="ENSRNOP00000018359.5"/>
    <property type="gene ID" value="ENSRNOG00000013717.8"/>
</dbReference>
<dbReference type="GeneID" id="25644"/>
<dbReference type="KEGG" id="rno:25644"/>
<dbReference type="UCSC" id="RGD:2214">
    <property type="organism name" value="rat"/>
</dbReference>
<dbReference type="AGR" id="RGD:2214"/>
<dbReference type="CTD" id="654"/>
<dbReference type="RGD" id="2214">
    <property type="gene designation" value="Bmp6"/>
</dbReference>
<dbReference type="eggNOG" id="KOG3900">
    <property type="taxonomic scope" value="Eukaryota"/>
</dbReference>
<dbReference type="GeneTree" id="ENSGT00940000158768"/>
<dbReference type="HOGENOM" id="CLU_020515_4_1_1"/>
<dbReference type="InParanoid" id="Q04906"/>
<dbReference type="OMA" id="ERQQPWP"/>
<dbReference type="PhylomeDB" id="Q04906"/>
<dbReference type="PRO" id="PR:Q04906"/>
<dbReference type="Proteomes" id="UP000002494">
    <property type="component" value="Chromosome 17"/>
</dbReference>
<dbReference type="Bgee" id="ENSRNOG00000013717">
    <property type="expression patterns" value="Expressed in lung and 20 other cell types or tissues"/>
</dbReference>
<dbReference type="GO" id="GO:0150005">
    <property type="term" value="C:enzyme activator complex"/>
    <property type="evidence" value="ECO:0000266"/>
    <property type="project" value="RGD"/>
</dbReference>
<dbReference type="GO" id="GO:0005615">
    <property type="term" value="C:extracellular space"/>
    <property type="evidence" value="ECO:0000314"/>
    <property type="project" value="RGD"/>
</dbReference>
<dbReference type="GO" id="GO:0031982">
    <property type="term" value="C:vesicle"/>
    <property type="evidence" value="ECO:0000314"/>
    <property type="project" value="RGD"/>
</dbReference>
<dbReference type="GO" id="GO:0070700">
    <property type="term" value="F:BMP receptor binding"/>
    <property type="evidence" value="ECO:0000266"/>
    <property type="project" value="RGD"/>
</dbReference>
<dbReference type="GO" id="GO:0005125">
    <property type="term" value="F:cytokine activity"/>
    <property type="evidence" value="ECO:0000318"/>
    <property type="project" value="GO_Central"/>
</dbReference>
<dbReference type="GO" id="GO:0008083">
    <property type="term" value="F:growth factor activity"/>
    <property type="evidence" value="ECO:0000314"/>
    <property type="project" value="RGD"/>
</dbReference>
<dbReference type="GO" id="GO:0046982">
    <property type="term" value="F:protein heterodimerization activity"/>
    <property type="evidence" value="ECO:0000266"/>
    <property type="project" value="RGD"/>
</dbReference>
<dbReference type="GO" id="GO:0030509">
    <property type="term" value="P:BMP signaling pathway"/>
    <property type="evidence" value="ECO:0000266"/>
    <property type="project" value="RGD"/>
</dbReference>
<dbReference type="GO" id="GO:0060348">
    <property type="term" value="P:bone development"/>
    <property type="evidence" value="ECO:0000266"/>
    <property type="project" value="RGD"/>
</dbReference>
<dbReference type="GO" id="GO:0051216">
    <property type="term" value="P:cartilage development"/>
    <property type="evidence" value="ECO:0007669"/>
    <property type="project" value="UniProtKB-KW"/>
</dbReference>
<dbReference type="GO" id="GO:0071773">
    <property type="term" value="P:cellular response to BMP stimulus"/>
    <property type="evidence" value="ECO:0000266"/>
    <property type="project" value="RGD"/>
</dbReference>
<dbReference type="GO" id="GO:0071281">
    <property type="term" value="P:cellular response to iron ion"/>
    <property type="evidence" value="ECO:0000266"/>
    <property type="project" value="RGD"/>
</dbReference>
<dbReference type="GO" id="GO:0071260">
    <property type="term" value="P:cellular response to mechanical stimulus"/>
    <property type="evidence" value="ECO:0000270"/>
    <property type="project" value="RGD"/>
</dbReference>
<dbReference type="GO" id="GO:0001958">
    <property type="term" value="P:endochondral ossification"/>
    <property type="evidence" value="ECO:0000266"/>
    <property type="project" value="RGD"/>
</dbReference>
<dbReference type="GO" id="GO:0001654">
    <property type="term" value="P:eye development"/>
    <property type="evidence" value="ECO:0000266"/>
    <property type="project" value="RGD"/>
</dbReference>
<dbReference type="GO" id="GO:0006955">
    <property type="term" value="P:immune response"/>
    <property type="evidence" value="ECO:0000266"/>
    <property type="project" value="RGD"/>
</dbReference>
<dbReference type="GO" id="GO:0006954">
    <property type="term" value="P:inflammatory response"/>
    <property type="evidence" value="ECO:0000266"/>
    <property type="project" value="RGD"/>
</dbReference>
<dbReference type="GO" id="GO:0006879">
    <property type="term" value="P:intracellular iron ion homeostasis"/>
    <property type="evidence" value="ECO:0000266"/>
    <property type="project" value="RGD"/>
</dbReference>
<dbReference type="GO" id="GO:0001822">
    <property type="term" value="P:kidney development"/>
    <property type="evidence" value="ECO:0000266"/>
    <property type="project" value="RGD"/>
</dbReference>
<dbReference type="GO" id="GO:0030539">
    <property type="term" value="P:male genitalia development"/>
    <property type="evidence" value="ECO:0000266"/>
    <property type="project" value="RGD"/>
</dbReference>
<dbReference type="GO" id="GO:0060586">
    <property type="term" value="P:multicellular organismal-level iron ion homeostasis"/>
    <property type="evidence" value="ECO:0000250"/>
    <property type="project" value="UniProtKB"/>
</dbReference>
<dbReference type="GO" id="GO:1903392">
    <property type="term" value="P:negative regulation of adherens junction organization"/>
    <property type="evidence" value="ECO:0000266"/>
    <property type="project" value="RGD"/>
</dbReference>
<dbReference type="GO" id="GO:2000048">
    <property type="term" value="P:negative regulation of cell-cell adhesion mediated by cadherin"/>
    <property type="evidence" value="ECO:0000266"/>
    <property type="project" value="RGD"/>
</dbReference>
<dbReference type="GO" id="GO:0000122">
    <property type="term" value="P:negative regulation of transcription by RNA polymerase II"/>
    <property type="evidence" value="ECO:0000266"/>
    <property type="project" value="RGD"/>
</dbReference>
<dbReference type="GO" id="GO:0030182">
    <property type="term" value="P:neuron differentiation"/>
    <property type="evidence" value="ECO:0000266"/>
    <property type="project" value="RGD"/>
</dbReference>
<dbReference type="GO" id="GO:0001503">
    <property type="term" value="P:ossification"/>
    <property type="evidence" value="ECO:0000314"/>
    <property type="project" value="RGD"/>
</dbReference>
<dbReference type="GO" id="GO:0001649">
    <property type="term" value="P:osteoblast differentiation"/>
    <property type="evidence" value="ECO:0000270"/>
    <property type="project" value="RGD"/>
</dbReference>
<dbReference type="GO" id="GO:0032349">
    <property type="term" value="P:positive regulation of aldosterone biosynthetic process"/>
    <property type="evidence" value="ECO:0000266"/>
    <property type="project" value="RGD"/>
</dbReference>
<dbReference type="GO" id="GO:2000860">
    <property type="term" value="P:positive regulation of aldosterone secretion"/>
    <property type="evidence" value="ECO:0000314"/>
    <property type="project" value="RGD"/>
</dbReference>
<dbReference type="GO" id="GO:0030501">
    <property type="term" value="P:positive regulation of bone mineralization"/>
    <property type="evidence" value="ECO:0000266"/>
    <property type="project" value="RGD"/>
</dbReference>
<dbReference type="GO" id="GO:0032332">
    <property type="term" value="P:positive regulation of chondrocyte differentiation"/>
    <property type="evidence" value="ECO:0000314"/>
    <property type="project" value="RGD"/>
</dbReference>
<dbReference type="GO" id="GO:0045603">
    <property type="term" value="P:positive regulation of endothelial cell differentiation"/>
    <property type="evidence" value="ECO:0000266"/>
    <property type="project" value="RGD"/>
</dbReference>
<dbReference type="GO" id="GO:0001938">
    <property type="term" value="P:positive regulation of endothelial cell proliferation"/>
    <property type="evidence" value="ECO:0000266"/>
    <property type="project" value="RGD"/>
</dbReference>
<dbReference type="GO" id="GO:0050679">
    <property type="term" value="P:positive regulation of epithelial cell proliferation"/>
    <property type="evidence" value="ECO:0000266"/>
    <property type="project" value="RGD"/>
</dbReference>
<dbReference type="GO" id="GO:0010628">
    <property type="term" value="P:positive regulation of gene expression"/>
    <property type="evidence" value="ECO:0000266"/>
    <property type="project" value="RGD"/>
</dbReference>
<dbReference type="GO" id="GO:1902533">
    <property type="term" value="P:positive regulation of intracellular signal transduction"/>
    <property type="evidence" value="ECO:0000266"/>
    <property type="project" value="RGD"/>
</dbReference>
<dbReference type="GO" id="GO:0031666">
    <property type="term" value="P:positive regulation of lipopolysaccharide-mediated signaling pathway"/>
    <property type="evidence" value="ECO:0000266"/>
    <property type="project" value="RGD"/>
</dbReference>
<dbReference type="GO" id="GO:0045666">
    <property type="term" value="P:positive regulation of neuron differentiation"/>
    <property type="evidence" value="ECO:0000266"/>
    <property type="project" value="RGD"/>
</dbReference>
<dbReference type="GO" id="GO:0045669">
    <property type="term" value="P:positive regulation of osteoblast differentiation"/>
    <property type="evidence" value="ECO:0000315"/>
    <property type="project" value="RGD"/>
</dbReference>
<dbReference type="GO" id="GO:0060391">
    <property type="term" value="P:positive regulation of SMAD protein signal transduction"/>
    <property type="evidence" value="ECO:0000266"/>
    <property type="project" value="RGD"/>
</dbReference>
<dbReference type="GO" id="GO:0045944">
    <property type="term" value="P:positive regulation of transcription by RNA polymerase II"/>
    <property type="evidence" value="ECO:0000266"/>
    <property type="project" value="RGD"/>
</dbReference>
<dbReference type="GO" id="GO:0043117">
    <property type="term" value="P:positive regulation of vascular permeability"/>
    <property type="evidence" value="ECO:0000266"/>
    <property type="project" value="RGD"/>
</dbReference>
<dbReference type="GO" id="GO:0045595">
    <property type="term" value="P:regulation of cell differentiation"/>
    <property type="evidence" value="ECO:0000304"/>
    <property type="project" value="RGD"/>
</dbReference>
<dbReference type="GO" id="GO:0014823">
    <property type="term" value="P:response to activity"/>
    <property type="evidence" value="ECO:0000270"/>
    <property type="project" value="RGD"/>
</dbReference>
<dbReference type="GO" id="GO:0051384">
    <property type="term" value="P:response to glucocorticoid"/>
    <property type="evidence" value="ECO:0000270"/>
    <property type="project" value="RGD"/>
</dbReference>
<dbReference type="GO" id="GO:0010039">
    <property type="term" value="P:response to iron ion"/>
    <property type="evidence" value="ECO:0000270"/>
    <property type="project" value="RGD"/>
</dbReference>
<dbReference type="GO" id="GO:0032026">
    <property type="term" value="P:response to magnesium ion"/>
    <property type="evidence" value="ECO:0000270"/>
    <property type="project" value="RGD"/>
</dbReference>
<dbReference type="GO" id="GO:0032526">
    <property type="term" value="P:response to retinoic acid"/>
    <property type="evidence" value="ECO:0000270"/>
    <property type="project" value="RGD"/>
</dbReference>
<dbReference type="GO" id="GO:0003323">
    <property type="term" value="P:type B pancreatic cell development"/>
    <property type="evidence" value="ECO:0000266"/>
    <property type="project" value="RGD"/>
</dbReference>
<dbReference type="CDD" id="cd19396">
    <property type="entry name" value="TGF_beta_BMP6"/>
    <property type="match status" value="1"/>
</dbReference>
<dbReference type="FunFam" id="2.10.90.10:FF:000003">
    <property type="entry name" value="Bone morphogenetic protein 5"/>
    <property type="match status" value="1"/>
</dbReference>
<dbReference type="Gene3D" id="2.60.120.970">
    <property type="match status" value="1"/>
</dbReference>
<dbReference type="Gene3D" id="2.10.90.10">
    <property type="entry name" value="Cystine-knot cytokines"/>
    <property type="match status" value="1"/>
</dbReference>
<dbReference type="InterPro" id="IPR029034">
    <property type="entry name" value="Cystine-knot_cytokine"/>
</dbReference>
<dbReference type="InterPro" id="IPR001839">
    <property type="entry name" value="TGF-b_C"/>
</dbReference>
<dbReference type="InterPro" id="IPR001111">
    <property type="entry name" value="TGF-b_propeptide"/>
</dbReference>
<dbReference type="InterPro" id="IPR015615">
    <property type="entry name" value="TGF-beta-rel"/>
</dbReference>
<dbReference type="InterPro" id="IPR017948">
    <property type="entry name" value="TGFb_CS"/>
</dbReference>
<dbReference type="PANTHER" id="PTHR11848:SF137">
    <property type="entry name" value="BONE MORPHOGENETIC PROTEIN 6"/>
    <property type="match status" value="1"/>
</dbReference>
<dbReference type="PANTHER" id="PTHR11848">
    <property type="entry name" value="TGF-BETA FAMILY"/>
    <property type="match status" value="1"/>
</dbReference>
<dbReference type="Pfam" id="PF00019">
    <property type="entry name" value="TGF_beta"/>
    <property type="match status" value="1"/>
</dbReference>
<dbReference type="Pfam" id="PF00688">
    <property type="entry name" value="TGFb_propeptide"/>
    <property type="match status" value="1"/>
</dbReference>
<dbReference type="SMART" id="SM00204">
    <property type="entry name" value="TGFB"/>
    <property type="match status" value="1"/>
</dbReference>
<dbReference type="SUPFAM" id="SSF57501">
    <property type="entry name" value="Cystine-knot cytokines"/>
    <property type="match status" value="1"/>
</dbReference>
<dbReference type="PROSITE" id="PS00250">
    <property type="entry name" value="TGF_BETA_1"/>
    <property type="match status" value="1"/>
</dbReference>
<dbReference type="PROSITE" id="PS51362">
    <property type="entry name" value="TGF_BETA_2"/>
    <property type="match status" value="1"/>
</dbReference>
<feature type="signal peptide" evidence="4">
    <location>
        <begin position="1"/>
        <end position="20"/>
    </location>
</feature>
<feature type="propeptide" id="PRO_0000033874" evidence="4">
    <location>
        <begin position="21"/>
        <end position="367"/>
    </location>
</feature>
<feature type="chain" id="PRO_0000033875" description="Bone morphogenetic protein 6">
    <location>
        <begin position="368"/>
        <end position="506"/>
    </location>
</feature>
<feature type="region of interest" description="Disordered" evidence="5">
    <location>
        <begin position="44"/>
        <end position="64"/>
    </location>
</feature>
<feature type="region of interest" description="Disordered" evidence="5">
    <location>
        <begin position="87"/>
        <end position="125"/>
    </location>
</feature>
<feature type="region of interest" description="Disordered" evidence="5">
    <location>
        <begin position="139"/>
        <end position="195"/>
    </location>
</feature>
<feature type="region of interest" description="Disordered" evidence="5">
    <location>
        <begin position="366"/>
        <end position="397"/>
    </location>
</feature>
<feature type="compositionally biased region" description="Low complexity" evidence="5">
    <location>
        <begin position="96"/>
        <end position="112"/>
    </location>
</feature>
<feature type="compositionally biased region" description="Acidic residues" evidence="5">
    <location>
        <begin position="140"/>
        <end position="153"/>
    </location>
</feature>
<feature type="compositionally biased region" description="Polar residues" evidence="5">
    <location>
        <begin position="386"/>
        <end position="397"/>
    </location>
</feature>
<feature type="glycosylation site" description="N-linked (GlcNAc...) asparagine" evidence="4">
    <location>
        <position position="234"/>
    </location>
</feature>
<feature type="glycosylation site" description="N-linked (GlcNAc...) asparagine" evidence="4">
    <location>
        <position position="262"/>
    </location>
</feature>
<feature type="glycosylation site" description="N-linked (GlcNAc...) asparagine" evidence="4">
    <location>
        <position position="379"/>
    </location>
</feature>
<feature type="glycosylation site" description="N-linked (GlcNAc...) asparagine" evidence="4">
    <location>
        <position position="397"/>
    </location>
</feature>
<feature type="glycosylation site" description="N-linked (GlcNAc...) asparagine" evidence="4">
    <location>
        <position position="447"/>
    </location>
</feature>
<feature type="disulfide bond" evidence="1">
    <location>
        <begin position="405"/>
        <end position="471"/>
    </location>
</feature>
<feature type="disulfide bond" evidence="1">
    <location>
        <begin position="434"/>
        <end position="503"/>
    </location>
</feature>
<feature type="disulfide bond" evidence="1">
    <location>
        <begin position="438"/>
        <end position="505"/>
    </location>
</feature>
<feature type="disulfide bond" description="Interchain" evidence="1">
    <location>
        <position position="470"/>
    </location>
</feature>
<evidence type="ECO:0000250" key="1"/>
<evidence type="ECO:0000250" key="2">
    <source>
        <dbReference type="UniProtKB" id="P20722"/>
    </source>
</evidence>
<evidence type="ECO:0000250" key="3">
    <source>
        <dbReference type="UniProtKB" id="P22004"/>
    </source>
</evidence>
<evidence type="ECO:0000255" key="4"/>
<evidence type="ECO:0000256" key="5">
    <source>
        <dbReference type="SAM" id="MobiDB-lite"/>
    </source>
</evidence>
<evidence type="ECO:0000305" key="6"/>
<comment type="function">
    <text evidence="2 3">Growth factor of the TGF-beta superfamily that plays essential roles in many developmental processes including cartilage and bone formation (By similarity). Also plays an important role in the regulation of HAMP/hepcidin expression and iron metabolism by acting as a ligand for hemojuvelin/HJV (By similarity). Also acts to promote expression of HAMP, potentially via the interaction with its receptor BMPR1A/ALK3 (By similarity). Initiates the canonical BMP signaling cascade by associating with type I receptor ACVR1 and type II receptor ACVR2B. In turn, ACVR1 propagates signal by phosphorylating SMAD1/5/8 that travel to the nucleus and act as activators and repressors of transcription of target. Can also signal through non-canonical pathway such as TAZ-Hippo signaling cascade to modulate VEGF signaling by regulating VEGFR2 expression (By similarity).</text>
</comment>
<comment type="subunit">
    <text evidence="2 3">Interacts with SOSTDC1 (By similarity). Interacts (when glycosylated) with type I receptor ACVR1; the interaction may induce HAMP expression (By similarity). Interacts with type II receptor ACVR2B (By similarity). Interacts with Hemojuvelin/HJV (By similarity). Interacts with ERFE; the interaction inhibits BMP-induced transcription of HAMP (By similarity). Interacts with BMPR1A/ALK3 (By similarity). Forms heterodimers with BMP2 in vitro; the heterodimer then binds to its receptor BMPR1A /ALK3 and may induce HAMP expression (By similarity).</text>
</comment>
<comment type="subcellular location">
    <subcellularLocation>
        <location evidence="1">Secreted</location>
    </subcellularLocation>
</comment>
<comment type="similarity">
    <text evidence="6">Belongs to the TGF-beta family.</text>
</comment>
<keyword id="KW-0891">Chondrogenesis</keyword>
<keyword id="KW-0165">Cleavage on pair of basic residues</keyword>
<keyword id="KW-0202">Cytokine</keyword>
<keyword id="KW-0217">Developmental protein</keyword>
<keyword id="KW-0221">Differentiation</keyword>
<keyword id="KW-1015">Disulfide bond</keyword>
<keyword id="KW-0325">Glycoprotein</keyword>
<keyword id="KW-0339">Growth factor</keyword>
<keyword id="KW-0892">Osteogenesis</keyword>
<keyword id="KW-1185">Reference proteome</keyword>
<keyword id="KW-0964">Secreted</keyword>
<keyword id="KW-0732">Signal</keyword>
<accession>Q04906</accession>
<accession>Q811S4</accession>
<reference key="1">
    <citation type="submission" date="2002-11" db="EMBL/GenBank/DDBJ databases">
        <title>An immunological study of BMP6 adenoviral gene therapy.</title>
        <authorList>
            <person name="Li H."/>
            <person name="Li J."/>
            <person name="Pittman D.D."/>
            <person name="Amalfitano A."/>
            <person name="Hankins G.R."/>
            <person name="Helm G.A."/>
        </authorList>
    </citation>
    <scope>NUCLEOTIDE SEQUENCE [MRNA]</scope>
    <source>
        <strain>Sprague-Dawley</strain>
    </source>
</reference>
<reference key="2">
    <citation type="journal article" date="1992" name="J. Neurosci. Res.">
        <title>Cloning of a novel TGF-beta related cytokine, the vgr, from rat brain: cloning of and comparison to homologous human cytokines.</title>
        <authorList>
            <person name="Sauermann U."/>
            <person name="Meyermann R."/>
            <person name="Schluesener H.J."/>
        </authorList>
    </citation>
    <scope>NUCLEOTIDE SEQUENCE [MRNA] OF 300-506</scope>
    <source>
        <strain>Lewis</strain>
        <tissue>Brain</tissue>
    </source>
</reference>
<sequence length="506" mass="56223">MPGLGRRAQWLCWWWGLLCSCGPPPLRPPLPVAAAAAGGQLLGAGGSPVRAEQPPPQSSSSGFLYRRLKTHEKREMQKEILSVLGLPHRPRPLHGLQQPQSPVLPQQQQSQQTAREEPPPGRLKSAPLFMLDLYNSLSKDDEEDGVSEGEGLEPESHGRASSSQLKQPSPGAAHSLNRKSLLAPGPGGSASPLTSAQDSAFLNDADMVMSFVNLVEYDKEFSPRQRHHKEFKFNLSQIPEGEAVTAAEFRVYKDCVVGSFKNQTFLISIYQVLQEHQHRDSDLFLLDTRVVWASEEGWLEFDITATSNLWVVTPQHNMGLQLSVVTRDGLHINPRAAGLVGRDGPYDKQPFMVAFFKVSEVHVRTTRSASSRRRQQSRNRSTQSQDVSRGSSASDYNSSELKTACKKHELYVSFQDLGWQDWIIAPKGYAANYCDGECSFPLNAHMNATNHAIVQTLVHLMNPEYVPKPCCAPTKLNAISVLYFDDNSNVILKKYRNMVVRACGCH</sequence>
<proteinExistence type="evidence at transcript level"/>
<organism>
    <name type="scientific">Rattus norvegicus</name>
    <name type="common">Rat</name>
    <dbReference type="NCBI Taxonomy" id="10116"/>
    <lineage>
        <taxon>Eukaryota</taxon>
        <taxon>Metazoa</taxon>
        <taxon>Chordata</taxon>
        <taxon>Craniata</taxon>
        <taxon>Vertebrata</taxon>
        <taxon>Euteleostomi</taxon>
        <taxon>Mammalia</taxon>
        <taxon>Eutheria</taxon>
        <taxon>Euarchontoglires</taxon>
        <taxon>Glires</taxon>
        <taxon>Rodentia</taxon>
        <taxon>Myomorpha</taxon>
        <taxon>Muroidea</taxon>
        <taxon>Muridae</taxon>
        <taxon>Murinae</taxon>
        <taxon>Rattus</taxon>
    </lineage>
</organism>
<protein>
    <recommendedName>
        <fullName>Bone morphogenetic protein 6</fullName>
        <shortName>BMP-6</shortName>
    </recommendedName>
    <alternativeName>
        <fullName>VG-1-related protein</fullName>
        <shortName>VGR-1</shortName>
    </alternativeName>
</protein>
<gene>
    <name type="primary">Bmp6</name>
    <name type="synonym">Bmp-6</name>
    <name type="synonym">Vgr</name>
</gene>
<name>BMP6_RAT</name>